<proteinExistence type="evidence at protein level"/>
<comment type="function">
    <text evidence="1">Carrier of the growing fatty acid chain in fatty acid biosynthesis (By similarity). May be involved in the synthesis of very-long-chain fatty acids. Accessory and non-catalytic subunit of the mitochondrial membrane respiratory chain NADH dehydrogenase (Complex I), which functions in the transfer of electrons from NADH to the respiratory chain (By similarity).</text>
</comment>
<comment type="pathway">
    <text>Lipid metabolism; fatty acid biosynthesis.</text>
</comment>
<comment type="subunit">
    <text>Complex I is composed of about 30 different subunits.</text>
</comment>
<comment type="subcellular location">
    <subcellularLocation>
        <location>Mitochondrion</location>
    </subcellularLocation>
</comment>
<comment type="PTM">
    <text evidence="1">4'-phosphopantetheine is transferred from CoA to a specific serine of apo-ACP by acpS. This modification is essential for activity because fatty acids are bound in thioester linkage to the sulfhydryl of the prosthetic group (By similarity).</text>
</comment>
<comment type="similarity">
    <text evidence="5">Belongs to the acyl carrier protein (ACP) family.</text>
</comment>
<name>ACPM_NEUCR</name>
<accession>P11943</accession>
<accession>Q7RWC9</accession>
<protein>
    <recommendedName>
        <fullName>Acyl carrier protein, mitochondrial</fullName>
        <shortName>ACP</shortName>
    </recommendedName>
    <alternativeName>
        <fullName>NADH-ubiquinone oxidoreductase 9.6 kDa subunit</fullName>
    </alternativeName>
</protein>
<sequence length="134" mass="14457">MFRTAALTAARVARPAVASAVRAGVARPAFVQAVPKVAAFQAVRFYSAGGHLKKDEVFSRIAQVLSGFDKVNDPKNITETAHFANDLGLDSLDTVEVVMAIEEEFSIEIPDKDADQIHSVDKAVEYILSQPDAN</sequence>
<reference key="1">
    <citation type="journal article" date="1991" name="Eur. J. Biochem.">
        <title>The acyl-carrier protein in Neurospora crassa mitochondria is a subunit of NADH:ubiquinone reductase (complex I).</title>
        <authorList>
            <person name="Sackmann U."/>
            <person name="Zensen R."/>
            <person name="Roehlen D.-A."/>
            <person name="Jahnke U."/>
            <person name="Weiss H."/>
        </authorList>
    </citation>
    <scope>NUCLEOTIDE SEQUENCE [MRNA]</scope>
    <scope>PROTEIN SEQUENCE OF 47-71</scope>
    <source>
        <strain>74-ORS-6a / FGSC 4200</strain>
    </source>
</reference>
<reference key="2">
    <citation type="journal article" date="1995" name="Curr. Genet.">
        <title>Different respiratory-defective phenotypes of Neurospora crassa and Saccharomyces cerevisiae after inactivation of the gene encoding the mitochondrial acyl carrier protein.</title>
        <authorList>
            <person name="Schneider R."/>
            <person name="Massow M."/>
            <person name="Lisowsky T.U."/>
            <person name="Weiss H."/>
        </authorList>
    </citation>
    <scope>NUCLEOTIDE SEQUENCE [GENOMIC DNA]</scope>
</reference>
<reference key="3">
    <citation type="journal article" date="2003" name="Nature">
        <title>The genome sequence of the filamentous fungus Neurospora crassa.</title>
        <authorList>
            <person name="Galagan J.E."/>
            <person name="Calvo S.E."/>
            <person name="Borkovich K.A."/>
            <person name="Selker E.U."/>
            <person name="Read N.D."/>
            <person name="Jaffe D.B."/>
            <person name="FitzHugh W."/>
            <person name="Ma L.-J."/>
            <person name="Smirnov S."/>
            <person name="Purcell S."/>
            <person name="Rehman B."/>
            <person name="Elkins T."/>
            <person name="Engels R."/>
            <person name="Wang S."/>
            <person name="Nielsen C.B."/>
            <person name="Butler J."/>
            <person name="Endrizzi M."/>
            <person name="Qui D."/>
            <person name="Ianakiev P."/>
            <person name="Bell-Pedersen D."/>
            <person name="Nelson M.A."/>
            <person name="Werner-Washburne M."/>
            <person name="Selitrennikoff C.P."/>
            <person name="Kinsey J.A."/>
            <person name="Braun E.L."/>
            <person name="Zelter A."/>
            <person name="Schulte U."/>
            <person name="Kothe G.O."/>
            <person name="Jedd G."/>
            <person name="Mewes H.-W."/>
            <person name="Staben C."/>
            <person name="Marcotte E."/>
            <person name="Greenberg D."/>
            <person name="Roy A."/>
            <person name="Foley K."/>
            <person name="Naylor J."/>
            <person name="Stange-Thomann N."/>
            <person name="Barrett R."/>
            <person name="Gnerre S."/>
            <person name="Kamal M."/>
            <person name="Kamvysselis M."/>
            <person name="Mauceli E.W."/>
            <person name="Bielke C."/>
            <person name="Rudd S."/>
            <person name="Frishman D."/>
            <person name="Krystofova S."/>
            <person name="Rasmussen C."/>
            <person name="Metzenberg R.L."/>
            <person name="Perkins D.D."/>
            <person name="Kroken S."/>
            <person name="Cogoni C."/>
            <person name="Macino G."/>
            <person name="Catcheside D.E.A."/>
            <person name="Li W."/>
            <person name="Pratt R.J."/>
            <person name="Osmani S.A."/>
            <person name="DeSouza C.P.C."/>
            <person name="Glass N.L."/>
            <person name="Orbach M.J."/>
            <person name="Berglund J.A."/>
            <person name="Voelker R."/>
            <person name="Yarden O."/>
            <person name="Plamann M."/>
            <person name="Seiler S."/>
            <person name="Dunlap J.C."/>
            <person name="Radford A."/>
            <person name="Aramayo R."/>
            <person name="Natvig D.O."/>
            <person name="Alex L.A."/>
            <person name="Mannhaupt G."/>
            <person name="Ebbole D.J."/>
            <person name="Freitag M."/>
            <person name="Paulsen I."/>
            <person name="Sachs M.S."/>
            <person name="Lander E.S."/>
            <person name="Nusbaum C."/>
            <person name="Birren B.W."/>
        </authorList>
    </citation>
    <scope>NUCLEOTIDE SEQUENCE [LARGE SCALE GENOMIC DNA]</scope>
    <source>
        <strain>ATCC 24698 / 74-OR23-1A / CBS 708.71 / DSM 1257 / FGSC 987</strain>
    </source>
</reference>
<reference key="4">
    <citation type="journal article" date="1988" name="Eur. J. Biochem.">
        <title>Neurospora mitochondria contain an acyl-carrier protein.</title>
        <authorList>
            <person name="Brody S."/>
            <person name="Mikolajczyk S."/>
        </authorList>
    </citation>
    <scope>PROTEIN SEQUENCE OF 47-105</scope>
    <scope>PHOSPHOPANTETHEINYLATION AT SER-91</scope>
</reference>
<gene>
    <name type="primary">nuo-12</name>
    <name type="synonym">acp</name>
    <name type="synonym">nuo9.6</name>
    <name type="ORF">NCU05008</name>
</gene>
<feature type="transit peptide" description="Mitochondrion" evidence="3 4">
    <location>
        <begin position="1"/>
        <end position="46"/>
    </location>
</feature>
<feature type="chain" id="PRO_0000000564" description="Acyl carrier protein, mitochondrial">
    <location>
        <begin position="47"/>
        <end position="134"/>
    </location>
</feature>
<feature type="domain" description="Carrier" evidence="2">
    <location>
        <begin position="55"/>
        <end position="131"/>
    </location>
</feature>
<feature type="modified residue" description="O-(pantetheine 4'-phosphoryl)serine" evidence="2 4">
    <location>
        <position position="91"/>
    </location>
</feature>
<feature type="sequence conflict" description="In Ref. 4; AA sequence." evidence="5" ref="4">
    <original>Q</original>
    <variation>E</variation>
    <location>
        <position position="63"/>
    </location>
</feature>
<evidence type="ECO:0000250" key="1"/>
<evidence type="ECO:0000255" key="2">
    <source>
        <dbReference type="PROSITE-ProRule" id="PRU00258"/>
    </source>
</evidence>
<evidence type="ECO:0000269" key="3">
    <source>
    </source>
</evidence>
<evidence type="ECO:0000269" key="4">
    <source>
    </source>
</evidence>
<evidence type="ECO:0000305" key="5"/>
<organism>
    <name type="scientific">Neurospora crassa (strain ATCC 24698 / 74-OR23-1A / CBS 708.71 / DSM 1257 / FGSC 987)</name>
    <dbReference type="NCBI Taxonomy" id="367110"/>
    <lineage>
        <taxon>Eukaryota</taxon>
        <taxon>Fungi</taxon>
        <taxon>Dikarya</taxon>
        <taxon>Ascomycota</taxon>
        <taxon>Pezizomycotina</taxon>
        <taxon>Sordariomycetes</taxon>
        <taxon>Sordariomycetidae</taxon>
        <taxon>Sordariales</taxon>
        <taxon>Sordariaceae</taxon>
        <taxon>Neurospora</taxon>
    </lineage>
</organism>
<keyword id="KW-0903">Direct protein sequencing</keyword>
<keyword id="KW-0249">Electron transport</keyword>
<keyword id="KW-0275">Fatty acid biosynthesis</keyword>
<keyword id="KW-0276">Fatty acid metabolism</keyword>
<keyword id="KW-0444">Lipid biosynthesis</keyword>
<keyword id="KW-0443">Lipid metabolism</keyword>
<keyword id="KW-0496">Mitochondrion</keyword>
<keyword id="KW-0596">Phosphopantetheine</keyword>
<keyword id="KW-0597">Phosphoprotein</keyword>
<keyword id="KW-1185">Reference proteome</keyword>
<keyword id="KW-0679">Respiratory chain</keyword>
<keyword id="KW-0809">Transit peptide</keyword>
<keyword id="KW-0813">Transport</keyword>
<dbReference type="EMBL" id="X59258">
    <property type="protein sequence ID" value="CAA41951.1"/>
    <property type="molecule type" value="mRNA"/>
</dbReference>
<dbReference type="EMBL" id="X83578">
    <property type="protein sequence ID" value="CAA58561.1"/>
    <property type="molecule type" value="Genomic_DNA"/>
</dbReference>
<dbReference type="EMBL" id="CM002241">
    <property type="protein sequence ID" value="EAA26699.1"/>
    <property type="molecule type" value="Genomic_DNA"/>
</dbReference>
<dbReference type="PIR" id="S17647">
    <property type="entry name" value="S17647"/>
</dbReference>
<dbReference type="RefSeq" id="XP_955935.1">
    <property type="nucleotide sequence ID" value="XM_950842.3"/>
</dbReference>
<dbReference type="SMR" id="P11943"/>
<dbReference type="FunCoup" id="P11943">
    <property type="interactions" value="730"/>
</dbReference>
<dbReference type="STRING" id="367110.P11943"/>
<dbReference type="TCDB" id="3.D.1.6.2">
    <property type="family name" value="the h+ or na+-translocating nadh dehydrogenase (ndh) family"/>
</dbReference>
<dbReference type="PaxDb" id="5141-EFNCRP00000001470"/>
<dbReference type="EnsemblFungi" id="EAA26699">
    <property type="protein sequence ID" value="EAA26699"/>
    <property type="gene ID" value="NCU05008"/>
</dbReference>
<dbReference type="GeneID" id="3872082"/>
<dbReference type="KEGG" id="ncr:NCU05008"/>
<dbReference type="VEuPathDB" id="FungiDB:NCU05008"/>
<dbReference type="HOGENOM" id="CLU_108696_0_0_1"/>
<dbReference type="InParanoid" id="P11943"/>
<dbReference type="OrthoDB" id="448946at2759"/>
<dbReference type="UniPathway" id="UPA00094"/>
<dbReference type="Proteomes" id="UP000001805">
    <property type="component" value="Chromosome 5, Linkage Group VI"/>
</dbReference>
<dbReference type="GO" id="GO:0099128">
    <property type="term" value="C:mitochondrial [2Fe-2S] assembly complex"/>
    <property type="evidence" value="ECO:0007669"/>
    <property type="project" value="EnsemblFungi"/>
</dbReference>
<dbReference type="GO" id="GO:0005739">
    <property type="term" value="C:mitochondrion"/>
    <property type="evidence" value="ECO:0000318"/>
    <property type="project" value="GO_Central"/>
</dbReference>
<dbReference type="GO" id="GO:0000035">
    <property type="term" value="F:acyl binding"/>
    <property type="evidence" value="ECO:0000318"/>
    <property type="project" value="GO_Central"/>
</dbReference>
<dbReference type="GO" id="GO:0000036">
    <property type="term" value="F:acyl carrier activity"/>
    <property type="evidence" value="ECO:0000318"/>
    <property type="project" value="GO_Central"/>
</dbReference>
<dbReference type="GO" id="GO:0016226">
    <property type="term" value="P:iron-sulfur cluster assembly"/>
    <property type="evidence" value="ECO:0007669"/>
    <property type="project" value="EnsemblFungi"/>
</dbReference>
<dbReference type="GO" id="GO:0009107">
    <property type="term" value="P:lipoate biosynthetic process"/>
    <property type="evidence" value="ECO:0007669"/>
    <property type="project" value="EnsemblFungi"/>
</dbReference>
<dbReference type="FunFam" id="1.10.1200.10:FF:000003">
    <property type="entry name" value="Acyl carrier protein"/>
    <property type="match status" value="1"/>
</dbReference>
<dbReference type="Gene3D" id="1.10.1200.10">
    <property type="entry name" value="ACP-like"/>
    <property type="match status" value="1"/>
</dbReference>
<dbReference type="HAMAP" id="MF_01217">
    <property type="entry name" value="Acyl_carrier"/>
    <property type="match status" value="1"/>
</dbReference>
<dbReference type="InterPro" id="IPR003231">
    <property type="entry name" value="ACP"/>
</dbReference>
<dbReference type="InterPro" id="IPR036736">
    <property type="entry name" value="ACP-like_sf"/>
</dbReference>
<dbReference type="InterPro" id="IPR009081">
    <property type="entry name" value="PP-bd_ACP"/>
</dbReference>
<dbReference type="InterPro" id="IPR006162">
    <property type="entry name" value="Ppantetheine_attach_site"/>
</dbReference>
<dbReference type="NCBIfam" id="TIGR00517">
    <property type="entry name" value="acyl_carrier"/>
    <property type="match status" value="1"/>
</dbReference>
<dbReference type="NCBIfam" id="NF002148">
    <property type="entry name" value="PRK00982.1-2"/>
    <property type="match status" value="1"/>
</dbReference>
<dbReference type="PANTHER" id="PTHR20863">
    <property type="entry name" value="ACYL CARRIER PROTEIN"/>
    <property type="match status" value="1"/>
</dbReference>
<dbReference type="PANTHER" id="PTHR20863:SF28">
    <property type="entry name" value="ACYL CARRIER PROTEIN, MITOCHONDRIAL"/>
    <property type="match status" value="1"/>
</dbReference>
<dbReference type="Pfam" id="PF00550">
    <property type="entry name" value="PP-binding"/>
    <property type="match status" value="1"/>
</dbReference>
<dbReference type="SUPFAM" id="SSF47336">
    <property type="entry name" value="ACP-like"/>
    <property type="match status" value="1"/>
</dbReference>
<dbReference type="PROSITE" id="PS50075">
    <property type="entry name" value="CARRIER"/>
    <property type="match status" value="1"/>
</dbReference>
<dbReference type="PROSITE" id="PS00012">
    <property type="entry name" value="PHOSPHOPANTETHEINE"/>
    <property type="match status" value="1"/>
</dbReference>